<comment type="function">
    <text evidence="1">Single strand-specific metallo-endoribonuclease involved in late-stage 70S ribosome quality control and in maturation of the 3' terminus of the 16S rRNA.</text>
</comment>
<comment type="cofactor">
    <cofactor evidence="1">
        <name>Zn(2+)</name>
        <dbReference type="ChEBI" id="CHEBI:29105"/>
    </cofactor>
    <text evidence="1">Binds 1 zinc ion.</text>
</comment>
<comment type="subcellular location">
    <subcellularLocation>
        <location evidence="1">Cytoplasm</location>
    </subcellularLocation>
</comment>
<comment type="similarity">
    <text evidence="1">Belongs to the endoribonuclease YbeY family.</text>
</comment>
<keyword id="KW-0963">Cytoplasm</keyword>
<keyword id="KW-0255">Endonuclease</keyword>
<keyword id="KW-0378">Hydrolase</keyword>
<keyword id="KW-0479">Metal-binding</keyword>
<keyword id="KW-0540">Nuclease</keyword>
<keyword id="KW-1185">Reference proteome</keyword>
<keyword id="KW-0690">Ribosome biogenesis</keyword>
<keyword id="KW-0698">rRNA processing</keyword>
<keyword id="KW-0862">Zinc</keyword>
<gene>
    <name evidence="1" type="primary">ybeY</name>
    <name type="ordered locus">SRU_2092</name>
</gene>
<feature type="chain" id="PRO_0000284301" description="Endoribonuclease YbeY">
    <location>
        <begin position="1"/>
        <end position="157"/>
    </location>
</feature>
<feature type="binding site" evidence="1">
    <location>
        <position position="121"/>
    </location>
    <ligand>
        <name>Zn(2+)</name>
        <dbReference type="ChEBI" id="CHEBI:29105"/>
        <note>catalytic</note>
    </ligand>
</feature>
<feature type="binding site" evidence="1">
    <location>
        <position position="125"/>
    </location>
    <ligand>
        <name>Zn(2+)</name>
        <dbReference type="ChEBI" id="CHEBI:29105"/>
        <note>catalytic</note>
    </ligand>
</feature>
<feature type="binding site" evidence="1">
    <location>
        <position position="131"/>
    </location>
    <ligand>
        <name>Zn(2+)</name>
        <dbReference type="ChEBI" id="CHEBI:29105"/>
        <note>catalytic</note>
    </ligand>
</feature>
<evidence type="ECO:0000255" key="1">
    <source>
        <dbReference type="HAMAP-Rule" id="MF_00009"/>
    </source>
</evidence>
<organism>
    <name type="scientific">Salinibacter ruber (strain DSM 13855 / M31)</name>
    <dbReference type="NCBI Taxonomy" id="309807"/>
    <lineage>
        <taxon>Bacteria</taxon>
        <taxon>Pseudomonadati</taxon>
        <taxon>Rhodothermota</taxon>
        <taxon>Rhodothermia</taxon>
        <taxon>Rhodothermales</taxon>
        <taxon>Salinibacteraceae</taxon>
        <taxon>Salinibacter</taxon>
    </lineage>
</organism>
<dbReference type="EC" id="3.1.-.-" evidence="1"/>
<dbReference type="EMBL" id="CP000159">
    <property type="protein sequence ID" value="ABC46278.1"/>
    <property type="molecule type" value="Genomic_DNA"/>
</dbReference>
<dbReference type="RefSeq" id="WP_011404820.1">
    <property type="nucleotide sequence ID" value="NC_007677.1"/>
</dbReference>
<dbReference type="RefSeq" id="YP_446198.1">
    <property type="nucleotide sequence ID" value="NC_007677.1"/>
</dbReference>
<dbReference type="SMR" id="Q2S0T3"/>
<dbReference type="STRING" id="309807.SRU_2092"/>
<dbReference type="EnsemblBacteria" id="ABC46278">
    <property type="protein sequence ID" value="ABC46278"/>
    <property type="gene ID" value="SRU_2092"/>
</dbReference>
<dbReference type="KEGG" id="sru:SRU_2092"/>
<dbReference type="eggNOG" id="COG0319">
    <property type="taxonomic scope" value="Bacteria"/>
</dbReference>
<dbReference type="HOGENOM" id="CLU_106710_3_3_10"/>
<dbReference type="OrthoDB" id="9811984at2"/>
<dbReference type="Proteomes" id="UP000008674">
    <property type="component" value="Chromosome"/>
</dbReference>
<dbReference type="GO" id="GO:0005737">
    <property type="term" value="C:cytoplasm"/>
    <property type="evidence" value="ECO:0007669"/>
    <property type="project" value="UniProtKB-SubCell"/>
</dbReference>
<dbReference type="GO" id="GO:0004222">
    <property type="term" value="F:metalloendopeptidase activity"/>
    <property type="evidence" value="ECO:0007669"/>
    <property type="project" value="InterPro"/>
</dbReference>
<dbReference type="GO" id="GO:0004521">
    <property type="term" value="F:RNA endonuclease activity"/>
    <property type="evidence" value="ECO:0007669"/>
    <property type="project" value="UniProtKB-UniRule"/>
</dbReference>
<dbReference type="GO" id="GO:0008270">
    <property type="term" value="F:zinc ion binding"/>
    <property type="evidence" value="ECO:0007669"/>
    <property type="project" value="UniProtKB-UniRule"/>
</dbReference>
<dbReference type="GO" id="GO:0006364">
    <property type="term" value="P:rRNA processing"/>
    <property type="evidence" value="ECO:0007669"/>
    <property type="project" value="UniProtKB-UniRule"/>
</dbReference>
<dbReference type="Gene3D" id="3.40.390.30">
    <property type="entry name" value="Metalloproteases ('zincins'), catalytic domain"/>
    <property type="match status" value="1"/>
</dbReference>
<dbReference type="HAMAP" id="MF_00009">
    <property type="entry name" value="Endoribonucl_YbeY"/>
    <property type="match status" value="1"/>
</dbReference>
<dbReference type="InterPro" id="IPR023091">
    <property type="entry name" value="MetalPrtase_cat_dom_sf_prd"/>
</dbReference>
<dbReference type="InterPro" id="IPR002036">
    <property type="entry name" value="YbeY"/>
</dbReference>
<dbReference type="InterPro" id="IPR020549">
    <property type="entry name" value="YbeY_CS"/>
</dbReference>
<dbReference type="NCBIfam" id="TIGR00043">
    <property type="entry name" value="rRNA maturation RNase YbeY"/>
    <property type="match status" value="1"/>
</dbReference>
<dbReference type="PANTHER" id="PTHR46986">
    <property type="entry name" value="ENDORIBONUCLEASE YBEY, CHLOROPLASTIC"/>
    <property type="match status" value="1"/>
</dbReference>
<dbReference type="PANTHER" id="PTHR46986:SF1">
    <property type="entry name" value="ENDORIBONUCLEASE YBEY, CHLOROPLASTIC"/>
    <property type="match status" value="1"/>
</dbReference>
<dbReference type="Pfam" id="PF02130">
    <property type="entry name" value="YbeY"/>
    <property type="match status" value="1"/>
</dbReference>
<dbReference type="SUPFAM" id="SSF55486">
    <property type="entry name" value="Metalloproteases ('zincins'), catalytic domain"/>
    <property type="match status" value="1"/>
</dbReference>
<dbReference type="PROSITE" id="PS01306">
    <property type="entry name" value="UPF0054"/>
    <property type="match status" value="1"/>
</dbReference>
<name>YBEY_SALRD</name>
<proteinExistence type="inferred from homology"/>
<protein>
    <recommendedName>
        <fullName evidence="1">Endoribonuclease YbeY</fullName>
        <ecNumber evidence="1">3.1.-.-</ecNumber>
    </recommendedName>
</protein>
<accession>Q2S0T3</accession>
<reference key="1">
    <citation type="journal article" date="2005" name="Proc. Natl. Acad. Sci. U.S.A.">
        <title>The genome of Salinibacter ruber: convergence and gene exchange among hyperhalophilic bacteria and archaea.</title>
        <authorList>
            <person name="Mongodin E.F."/>
            <person name="Nelson K.E."/>
            <person name="Daugherty S."/>
            <person name="DeBoy R.T."/>
            <person name="Wister J."/>
            <person name="Khouri H."/>
            <person name="Weidman J."/>
            <person name="Walsh D.A."/>
            <person name="Papke R.T."/>
            <person name="Sanchez Perez G."/>
            <person name="Sharma A.K."/>
            <person name="Nesbo C.L."/>
            <person name="MacLeod D."/>
            <person name="Bapteste E."/>
            <person name="Doolittle W.F."/>
            <person name="Charlebois R.L."/>
            <person name="Legault B."/>
            <person name="Rodriguez-Valera F."/>
        </authorList>
    </citation>
    <scope>NUCLEOTIDE SEQUENCE [LARGE SCALE GENOMIC DNA]</scope>
    <source>
        <strain>DSM 13855 / CECT 5946 / M31</strain>
    </source>
</reference>
<sequence>MPPEYPEPLSIEHDHPSRELDAGTLRYVIQHVVDAEGTSLTHLSLVLTDHDTVRRLNQSYLDHDYDTDVLSFSLREGPAPSSGASGEGIEGEVYVDLDTAAERHDEFDTSFEREAYRYVVHGLLHLVGYDDAQPAGQDKMREKEDQYLNAVLPAPSS</sequence>